<organism>
    <name type="scientific">Trichoderma harzianum</name>
    <name type="common">Hypocrea lixii</name>
    <dbReference type="NCBI Taxonomy" id="5544"/>
    <lineage>
        <taxon>Eukaryota</taxon>
        <taxon>Fungi</taxon>
        <taxon>Dikarya</taxon>
        <taxon>Ascomycota</taxon>
        <taxon>Pezizomycotina</taxon>
        <taxon>Sordariomycetes</taxon>
        <taxon>Hypocreomycetidae</taxon>
        <taxon>Hypocreales</taxon>
        <taxon>Hypocreaceae</taxon>
        <taxon>Trichoderma</taxon>
    </lineage>
</organism>
<feature type="signal peptide" evidence="2">
    <location>
        <begin position="1"/>
        <end position="16"/>
    </location>
</feature>
<feature type="chain" id="PRO_5012442864" description="Class II hydrophobin 1">
    <location>
        <begin position="17"/>
        <end position="93"/>
    </location>
</feature>
<feature type="disulfide bond" evidence="1">
    <location>
        <begin position="24"/>
        <end position="74"/>
    </location>
</feature>
<feature type="disulfide bond" evidence="1">
    <location>
        <begin position="35"/>
        <end position="65"/>
    </location>
</feature>
<feature type="disulfide bond" evidence="1">
    <location>
        <begin position="36"/>
        <end position="48"/>
    </location>
</feature>
<feature type="disulfide bond" evidence="1">
    <location>
        <begin position="75"/>
        <end position="86"/>
    </location>
</feature>
<dbReference type="EMBL" id="KT258897">
    <property type="protein sequence ID" value="ANU06237.1"/>
    <property type="molecule type" value="mRNA"/>
</dbReference>
<dbReference type="SMR" id="A0A219TTW8"/>
<dbReference type="GO" id="GO:0005576">
    <property type="term" value="C:extracellular region"/>
    <property type="evidence" value="ECO:0007669"/>
    <property type="project" value="UniProtKB-KW"/>
</dbReference>
<dbReference type="CDD" id="cd23508">
    <property type="entry name" value="hydrophobin_II"/>
    <property type="match status" value="1"/>
</dbReference>
<dbReference type="Gene3D" id="3.20.120.10">
    <property type="entry name" value="Hydrophobin"/>
    <property type="match status" value="1"/>
</dbReference>
<dbReference type="InterPro" id="IPR010636">
    <property type="entry name" value="Cerato-ulmin_hydrophobin"/>
</dbReference>
<dbReference type="InterPro" id="IPR036686">
    <property type="entry name" value="Hydrophobin_sf"/>
</dbReference>
<dbReference type="PANTHER" id="PTHR42341">
    <property type="entry name" value="HYDROPHOBIN"/>
    <property type="match status" value="1"/>
</dbReference>
<dbReference type="PANTHER" id="PTHR42341:SF1">
    <property type="entry name" value="HYDROPHOBIN"/>
    <property type="match status" value="1"/>
</dbReference>
<dbReference type="Pfam" id="PF06766">
    <property type="entry name" value="Hydrophobin_2"/>
    <property type="match status" value="1"/>
</dbReference>
<dbReference type="SUPFAM" id="SSF101751">
    <property type="entry name" value="Hydrophobin II, HfbII"/>
    <property type="match status" value="1"/>
</dbReference>
<gene>
    <name evidence="4" type="primary">hyd1</name>
</gene>
<comment type="function">
    <text evidence="3 5">Aerial growth, conidiation, and dispersal of filamentous fungi in the environment rely upon a capability of their secreting small amphipathic proteins called hydrophobins (HPBs) with low sequence identity. Class I can self-assemble into an outermost layer of rodlet bundles on aerial cell surfaces, conferring cellular hydrophobicity that supports fungal growth, development and dispersal; whereas Class II form highly ordered films at water-air interfaces through intermolecular interactions but contribute nothing to the rodlet structure (Probable). Hyd1 is a class II hydrophobin that acts as an elicitor of induced systemic resistance (ISR) in plants (PubMed:30803127). During interaction with the plant, binds with the maize target protein UBL in order to recruit more UBL proteins in maize roots to elicit plant defense responses, including cell death as well as brassinosteroid, jasmonate (JA) and ethylene (ET) signaling (PubMed:30803127).</text>
</comment>
<comment type="subunit">
    <text evidence="1 3">Interacts with maize ubiquilin 1-like (UBL) protein (PubMed:30803127). Homotetramer (By similarity). Further self-assembles to form highly ordered films at water-air interfaces through intermolecular interactions (By similarity).</text>
</comment>
<comment type="subcellular location">
    <subcellularLocation>
        <location evidence="3">Cell membrane</location>
    </subcellularLocation>
    <text evidence="3">Localizes to the plasma membrane in maize roots during plant interaction.</text>
</comment>
<comment type="similarity">
    <text evidence="5">Belongs to the cerato-ulmin hydrophobin family.</text>
</comment>
<protein>
    <recommendedName>
        <fullName evidence="4">Class II hydrophobin 1</fullName>
    </recommendedName>
</protein>
<accession>A0A219TTW8</accession>
<keyword id="KW-1003">Cell membrane</keyword>
<keyword id="KW-1015">Disulfide bond</keyword>
<keyword id="KW-0472">Membrane</keyword>
<keyword id="KW-0732">Signal</keyword>
<name>HYD1_TRIHA</name>
<sequence length="93" mass="9252">MKFFAVAALFVASAMAGPMGSEGCPGGLTGTVPLCCATNVLNIADLDCSTPTIPVPNVGIFQAHCASKGKQPVCCTLPVAGQGLLCNKPTGAQ</sequence>
<evidence type="ECO:0000250" key="1">
    <source>
        <dbReference type="UniProtKB" id="P52754"/>
    </source>
</evidence>
<evidence type="ECO:0000255" key="2"/>
<evidence type="ECO:0000269" key="3">
    <source>
    </source>
</evidence>
<evidence type="ECO:0000303" key="4">
    <source>
    </source>
</evidence>
<evidence type="ECO:0000305" key="5"/>
<proteinExistence type="evidence at protein level"/>
<reference key="1">
    <citation type="journal article" date="2020" name="J. Integr. Plant Biol.">
        <title>Elicitor hydrophobin Hyd1 interacts with Ubiquilin1-like to induce maize systemic resistance.</title>
        <authorList>
            <person name="Yu C."/>
            <person name="Dou K."/>
            <person name="Wang S."/>
            <person name="Wu Q."/>
            <person name="Ni M."/>
            <person name="Zhang T."/>
            <person name="Lu Z."/>
            <person name="Tang J."/>
            <person name="Chen J."/>
        </authorList>
    </citation>
    <scope>NUCLEOTIDE SEQUENCE [MRNA]</scope>
    <scope>FUNCTION</scope>
    <scope>SUBCELLULAR LOCATION</scope>
    <scope>INTERACTION WITH PLANT UBL</scope>
    <scope>DOMAIN</scope>
    <source>
        <strain>T28</strain>
    </source>
</reference>